<reference key="1">
    <citation type="journal article" date="2002" name="Genomics">
        <title>DEFOG: a practical scheme for deciphering families of genes.</title>
        <authorList>
            <person name="Fuchs T."/>
            <person name="Malecova B."/>
            <person name="Linhart C."/>
            <person name="Sharan R."/>
            <person name="Khen M."/>
            <person name="Herwig R."/>
            <person name="Shmulevich D."/>
            <person name="Elkon R."/>
            <person name="Steinfath M."/>
            <person name="O'Brien J.K."/>
            <person name="Radelof U."/>
            <person name="Lehrach H."/>
            <person name="Lancet D."/>
            <person name="Shamir R."/>
        </authorList>
    </citation>
    <scope>NUCLEOTIDE SEQUENCE [GENOMIC DNA] OF 84-155</scope>
</reference>
<reference key="2">
    <citation type="journal article" date="2004" name="Proc. Natl. Acad. Sci. U.S.A.">
        <title>The human olfactory receptor gene family.</title>
        <authorList>
            <person name="Malnic B."/>
            <person name="Godfrey P.A."/>
            <person name="Buck L.B."/>
        </authorList>
    </citation>
    <scope>FUNCTION</scope>
</reference>
<reference key="3">
    <citation type="journal article" date="2004" name="Proc. Natl. Acad. Sci. U.S.A.">
        <authorList>
            <person name="Malnic B."/>
            <person name="Godfrey P.A."/>
            <person name="Buck L.B."/>
        </authorList>
    </citation>
    <scope>ERRATUM OF PUBMED:14983052</scope>
</reference>
<reference key="4">
    <citation type="journal article" date="2003" name="Nat. Genet.">
        <title>Different noses for different people.</title>
        <authorList>
            <person name="Menashe I."/>
            <person name="Man O."/>
            <person name="Lancet D."/>
            <person name="Gilad Y."/>
        </authorList>
    </citation>
    <scope>POLYMORPHISM</scope>
</reference>
<gene>
    <name type="primary">OR5AL1</name>
    <name type="synonym">OR5AL1P</name>
</gene>
<accession>P0C617</accession>
<name>O5AL1_HUMAN</name>
<protein>
    <recommendedName>
        <fullName>Olfactory receptor 5AL1</fullName>
    </recommendedName>
    <alternativeName>
        <fullName>Olfactory receptor OR11-184</fullName>
    </alternativeName>
</protein>
<sequence length="329" mass="36929">MCALKGFLEENFYTYSVAKGNHSTVYEFILLGLTDNAELQVTLFGIFLVVYLASFMGNFGLIMLIQISPQLHTPMYFFLSHLAFVDFSFTSSVAPNTLVNFLCEVKSITFYACAIQVCCFITFVVCELYLLSIMAYDRYVAICNPLLYVILIPRKLCIKLIASTYVYGFTVGLVQTVATSYLSFCDSNVINHFYHDDVPLVALACSDTHVKELMLLIIAGFNTLCSLVIVLISYGFIFFAILRIHSAEGRQKAFSTSASHLTSITIFYGTIIFMYPQPKSSHSLNMDKVASVFNVVVIPTLNPLIYSLRNQEVKNALKRIIEKLCLAVK</sequence>
<dbReference type="EMBL" id="AF399353">
    <property type="status" value="NOT_ANNOTATED_CDS"/>
    <property type="molecule type" value="Genomic_DNA"/>
</dbReference>
<dbReference type="EMBL" id="BK004654">
    <property type="status" value="NOT_ANNOTATED_CDS"/>
    <property type="molecule type" value="Genomic_DNA"/>
</dbReference>
<dbReference type="RefSeq" id="NP_001335159.1">
    <property type="nucleotide sequence ID" value="NM_001348230.2"/>
</dbReference>
<dbReference type="SMR" id="P0C617"/>
<dbReference type="FunCoup" id="P0C617">
    <property type="interactions" value="851"/>
</dbReference>
<dbReference type="GlyCosmos" id="P0C617">
    <property type="glycosylation" value="1 site, No reported glycans"/>
</dbReference>
<dbReference type="GlyGen" id="P0C617">
    <property type="glycosylation" value="2 sites, 1 O-linked glycan (1 site)"/>
</dbReference>
<dbReference type="iPTMnet" id="P0C617"/>
<dbReference type="PhosphoSitePlus" id="P0C617"/>
<dbReference type="BioMuta" id="HGNC:14844"/>
<dbReference type="DMDM" id="166215763"/>
<dbReference type="jPOST" id="P0C617"/>
<dbReference type="MassIVE" id="P0C617"/>
<dbReference type="DNASU" id="79482"/>
<dbReference type="GeneID" id="79482"/>
<dbReference type="KEGG" id="hsa:79482"/>
<dbReference type="MANE-Select" id="ENST00000710330.1">
    <property type="protein sequence ID" value="ENSP00000518210.1"/>
    <property type="RefSeq nucleotide sequence ID" value="NM_001348230.2"/>
    <property type="RefSeq protein sequence ID" value="NP_001335159.1"/>
</dbReference>
<dbReference type="AGR" id="HGNC:14844"/>
<dbReference type="CTD" id="79482"/>
<dbReference type="GeneCards" id="OR5AL1"/>
<dbReference type="HGNC" id="HGNC:14844">
    <property type="gene designation" value="OR5AL1"/>
</dbReference>
<dbReference type="neXtProt" id="NX_P0C617"/>
<dbReference type="InParanoid" id="P0C617"/>
<dbReference type="OrthoDB" id="9518048at2759"/>
<dbReference type="PAN-GO" id="P0C617">
    <property type="GO annotations" value="4 GO annotations based on evolutionary models"/>
</dbReference>
<dbReference type="PhylomeDB" id="P0C617"/>
<dbReference type="PathwayCommons" id="P0C617"/>
<dbReference type="Reactome" id="R-HSA-381753">
    <property type="pathway name" value="Olfactory Signaling Pathway"/>
</dbReference>
<dbReference type="Reactome" id="R-HSA-9752946">
    <property type="pathway name" value="Expression and translocation of olfactory receptors"/>
</dbReference>
<dbReference type="Pharos" id="P0C617">
    <property type="development level" value="Tdark"/>
</dbReference>
<dbReference type="PRO" id="PR:P0C617"/>
<dbReference type="Proteomes" id="UP000005640">
    <property type="component" value="Unplaced"/>
</dbReference>
<dbReference type="RNAct" id="P0C617">
    <property type="molecule type" value="protein"/>
</dbReference>
<dbReference type="GO" id="GO:0005886">
    <property type="term" value="C:plasma membrane"/>
    <property type="evidence" value="ECO:0000304"/>
    <property type="project" value="Reactome"/>
</dbReference>
<dbReference type="GO" id="GO:0004930">
    <property type="term" value="F:G protein-coupled receptor activity"/>
    <property type="evidence" value="ECO:0007669"/>
    <property type="project" value="UniProtKB-KW"/>
</dbReference>
<dbReference type="GO" id="GO:0004984">
    <property type="term" value="F:olfactory receptor activity"/>
    <property type="evidence" value="ECO:0007669"/>
    <property type="project" value="InterPro"/>
</dbReference>
<dbReference type="CDD" id="cd15413">
    <property type="entry name" value="7tmA_OR8K-like"/>
    <property type="match status" value="1"/>
</dbReference>
<dbReference type="FunFam" id="1.20.1070.10:FF:000003">
    <property type="entry name" value="Olfactory receptor"/>
    <property type="match status" value="1"/>
</dbReference>
<dbReference type="Gene3D" id="1.20.1070.10">
    <property type="entry name" value="Rhodopsin 7-helix transmembrane proteins"/>
    <property type="match status" value="1"/>
</dbReference>
<dbReference type="InterPro" id="IPR000276">
    <property type="entry name" value="GPCR_Rhodpsn"/>
</dbReference>
<dbReference type="InterPro" id="IPR017452">
    <property type="entry name" value="GPCR_Rhodpsn_7TM"/>
</dbReference>
<dbReference type="InterPro" id="IPR000725">
    <property type="entry name" value="Olfact_rcpt"/>
</dbReference>
<dbReference type="PANTHER" id="PTHR48018">
    <property type="entry name" value="OLFACTORY RECEPTOR"/>
    <property type="match status" value="1"/>
</dbReference>
<dbReference type="Pfam" id="PF13853">
    <property type="entry name" value="7tm_4"/>
    <property type="match status" value="1"/>
</dbReference>
<dbReference type="PRINTS" id="PR00237">
    <property type="entry name" value="GPCRRHODOPSN"/>
</dbReference>
<dbReference type="PRINTS" id="PR00245">
    <property type="entry name" value="OLFACTORYR"/>
</dbReference>
<dbReference type="SUPFAM" id="SSF81321">
    <property type="entry name" value="Family A G protein-coupled receptor-like"/>
    <property type="match status" value="1"/>
</dbReference>
<dbReference type="PROSITE" id="PS00237">
    <property type="entry name" value="G_PROTEIN_RECEP_F1_1"/>
    <property type="match status" value="1"/>
</dbReference>
<dbReference type="PROSITE" id="PS50262">
    <property type="entry name" value="G_PROTEIN_RECEP_F1_2"/>
    <property type="match status" value="1"/>
</dbReference>
<evidence type="ECO:0000255" key="1"/>
<evidence type="ECO:0000255" key="2">
    <source>
        <dbReference type="PROSITE-ProRule" id="PRU00521"/>
    </source>
</evidence>
<evidence type="ECO:0000269" key="3">
    <source>
    </source>
</evidence>
<evidence type="ECO:0000305" key="4">
    <source>
    </source>
</evidence>
<organism>
    <name type="scientific">Homo sapiens</name>
    <name type="common">Human</name>
    <dbReference type="NCBI Taxonomy" id="9606"/>
    <lineage>
        <taxon>Eukaryota</taxon>
        <taxon>Metazoa</taxon>
        <taxon>Chordata</taxon>
        <taxon>Craniata</taxon>
        <taxon>Vertebrata</taxon>
        <taxon>Euteleostomi</taxon>
        <taxon>Mammalia</taxon>
        <taxon>Eutheria</taxon>
        <taxon>Euarchontoglires</taxon>
        <taxon>Primates</taxon>
        <taxon>Haplorrhini</taxon>
        <taxon>Catarrhini</taxon>
        <taxon>Hominidae</taxon>
        <taxon>Homo</taxon>
    </lineage>
</organism>
<comment type="function">
    <text evidence="4">Odorant receptor.</text>
</comment>
<comment type="subcellular location">
    <subcellularLocation>
        <location>Cell membrane</location>
        <topology>Multi-pass membrane protein</topology>
    </subcellularLocation>
</comment>
<comment type="polymorphism">
    <text evidence="3">A double nucleotide deletion, introducing a frameshift at position 157 of the protein, results in an early stop codon producing a pseudogene in a minority of the population.</text>
</comment>
<comment type="similarity">
    <text evidence="2">Belongs to the G-protein coupled receptor 1 family.</text>
</comment>
<comment type="online information" name="Human Olfactory Receptor Data Exploratorium (HORDE)">
    <link uri="http://genome.weizmann.ac.il/horde/card/index/symbol:OR5AL1P"/>
</comment>
<keyword id="KW-1003">Cell membrane</keyword>
<keyword id="KW-1015">Disulfide bond</keyword>
<keyword id="KW-0297">G-protein coupled receptor</keyword>
<keyword id="KW-0325">Glycoprotein</keyword>
<keyword id="KW-0472">Membrane</keyword>
<keyword id="KW-0552">Olfaction</keyword>
<keyword id="KW-0675">Receptor</keyword>
<keyword id="KW-1185">Reference proteome</keyword>
<keyword id="KW-0716">Sensory transduction</keyword>
<keyword id="KW-0807">Transducer</keyword>
<keyword id="KW-0812">Transmembrane</keyword>
<keyword id="KW-1133">Transmembrane helix</keyword>
<proteinExistence type="inferred from homology"/>
<feature type="chain" id="PRO_0000314462" description="Olfactory receptor 5AL1">
    <location>
        <begin position="1"/>
        <end position="329"/>
    </location>
</feature>
<feature type="topological domain" description="Extracellular" evidence="1">
    <location>
        <begin position="1"/>
        <end position="44"/>
    </location>
</feature>
<feature type="transmembrane region" description="Helical; Name=1" evidence="1">
    <location>
        <begin position="45"/>
        <end position="65"/>
    </location>
</feature>
<feature type="topological domain" description="Cytoplasmic" evidence="1">
    <location>
        <begin position="66"/>
        <end position="73"/>
    </location>
</feature>
<feature type="transmembrane region" description="Helical; Name=2" evidence="1">
    <location>
        <begin position="74"/>
        <end position="94"/>
    </location>
</feature>
<feature type="topological domain" description="Extracellular" evidence="1">
    <location>
        <begin position="95"/>
        <end position="113"/>
    </location>
</feature>
<feature type="transmembrane region" description="Helical; Name=3" evidence="1">
    <location>
        <begin position="114"/>
        <end position="134"/>
    </location>
</feature>
<feature type="topological domain" description="Cytoplasmic" evidence="1">
    <location>
        <begin position="135"/>
        <end position="157"/>
    </location>
</feature>
<feature type="transmembrane region" description="Helical; Name=4" evidence="1">
    <location>
        <begin position="158"/>
        <end position="178"/>
    </location>
</feature>
<feature type="topological domain" description="Extracellular" evidence="1">
    <location>
        <begin position="179"/>
        <end position="220"/>
    </location>
</feature>
<feature type="transmembrane region" description="Helical; Name=5" evidence="1">
    <location>
        <begin position="221"/>
        <end position="241"/>
    </location>
</feature>
<feature type="topological domain" description="Cytoplasmic" evidence="1">
    <location>
        <begin position="242"/>
        <end position="253"/>
    </location>
</feature>
<feature type="transmembrane region" description="Helical; Name=6" evidence="1">
    <location>
        <begin position="254"/>
        <end position="274"/>
    </location>
</feature>
<feature type="topological domain" description="Extracellular" evidence="1">
    <location>
        <begin position="275"/>
        <end position="287"/>
    </location>
</feature>
<feature type="transmembrane region" description="Helical; Name=7" evidence="1">
    <location>
        <begin position="288"/>
        <end position="308"/>
    </location>
</feature>
<feature type="topological domain" description="Cytoplasmic" evidence="1">
    <location>
        <begin position="309"/>
        <end position="329"/>
    </location>
</feature>
<feature type="glycosylation site" description="N-linked (GlcNAc...) asparagine" evidence="1">
    <location>
        <position position="21"/>
    </location>
</feature>
<feature type="disulfide bond" evidence="2">
    <location>
        <begin position="113"/>
        <end position="205"/>
    </location>
</feature>